<sequence length="232" mass="24283">MATPGRPWAQARSAYRASEVLRRVTGRRRDPGPQSNGPGQEDARAPGRLARLLGQLRAEAASRSEVPRLLKLVERAGAGAAGAGERTGAHSRGSVCSVCGEPRGRATYPAGVLEVSERRLQEGLAAVREELGAEIEALRAELRAELDALRALLPPPPPSPPARREPRAVPRATPRGPTLLRTLGTVSALVAASRPADDAPDGPAECGAHRAPVRKNHKKMPVPPGAPQGGGD</sequence>
<dbReference type="EMBL" id="AP000552">
    <property type="status" value="NOT_ANNOTATED_CDS"/>
    <property type="molecule type" value="Genomic_DNA"/>
</dbReference>
<dbReference type="CCDS" id="CCDS93124.1"/>
<dbReference type="RefSeq" id="NP_001382954.1">
    <property type="nucleotide sequence ID" value="NM_001396025.1"/>
</dbReference>
<dbReference type="RefSeq" id="XP_047297072.1">
    <property type="nucleotide sequence ID" value="XM_047441116.1"/>
</dbReference>
<dbReference type="RefSeq" id="XP_054181037.1">
    <property type="nucleotide sequence ID" value="XM_054325062.1"/>
</dbReference>
<dbReference type="SMR" id="A0A494C0Y3"/>
<dbReference type="GlyGen" id="A0A494C0Y3">
    <property type="glycosylation" value="1 site"/>
</dbReference>
<dbReference type="MassIVE" id="A0A494C0Y3"/>
<dbReference type="PeptideAtlas" id="A0A494C0Y3"/>
<dbReference type="Ensembl" id="ENST00000652479.1">
    <property type="protein sequence ID" value="ENSP00000498770.1"/>
    <property type="gene ID" value="ENSG00000286102.1"/>
</dbReference>
<dbReference type="GeneID" id="117134598"/>
<dbReference type="MANE-Select" id="ENST00000652479.1">
    <property type="protein sequence ID" value="ENSP00000498770.1"/>
    <property type="RefSeq nucleotide sequence ID" value="NM_001396025.1"/>
    <property type="RefSeq protein sequence ID" value="NP_001382954.1"/>
</dbReference>
<dbReference type="AGR" id="HGNC:54844"/>
<dbReference type="GeneCards" id="FAM246A"/>
<dbReference type="HGNC" id="HGNC:54844">
    <property type="gene designation" value="FAM246A"/>
</dbReference>
<dbReference type="HPA" id="ENSG00000286102">
    <property type="expression patterns" value="Not detected"/>
</dbReference>
<dbReference type="neXtProt" id="NX_A0A494C0Y3"/>
<dbReference type="VEuPathDB" id="HostDB:ENSG00000286102"/>
<dbReference type="GeneTree" id="ENSGT01120000272536"/>
<dbReference type="InParanoid" id="A0A494C0Y3"/>
<dbReference type="OMA" id="RRDNGPQ"/>
<dbReference type="OrthoDB" id="9540191at2759"/>
<dbReference type="PRO" id="PR:A0A494C0Y3"/>
<dbReference type="Proteomes" id="UP000005640">
    <property type="component" value="Chromosome 22"/>
</dbReference>
<dbReference type="Bgee" id="ENSG00000286102">
    <property type="expression patterns" value="Expressed in prefrontal cortex and 2 other cell types or tissues"/>
</dbReference>
<reference key="1">
    <citation type="journal article" date="1999" name="Nature">
        <title>The DNA sequence of human chromosome 22.</title>
        <authorList>
            <person name="Dunham I."/>
            <person name="Hunt A.R."/>
            <person name="Collins J.E."/>
            <person name="Bruskiewich R."/>
            <person name="Beare D.M."/>
            <person name="Clamp M."/>
            <person name="Smink L.J."/>
            <person name="Ainscough R."/>
            <person name="Almeida J.P."/>
            <person name="Babbage A.K."/>
            <person name="Bagguley C."/>
            <person name="Bailey J."/>
            <person name="Barlow K.F."/>
            <person name="Bates K.N."/>
            <person name="Beasley O.P."/>
            <person name="Bird C.P."/>
            <person name="Blakey S.E."/>
            <person name="Bridgeman A.M."/>
            <person name="Buck D."/>
            <person name="Burgess J."/>
            <person name="Burrill W.D."/>
            <person name="Burton J."/>
            <person name="Carder C."/>
            <person name="Carter N.P."/>
            <person name="Chen Y."/>
            <person name="Clark G."/>
            <person name="Clegg S.M."/>
            <person name="Cobley V.E."/>
            <person name="Cole C.G."/>
            <person name="Collier R.E."/>
            <person name="Connor R."/>
            <person name="Conroy D."/>
            <person name="Corby N.R."/>
            <person name="Coville G.J."/>
            <person name="Cox A.V."/>
            <person name="Davis J."/>
            <person name="Dawson E."/>
            <person name="Dhami P.D."/>
            <person name="Dockree C."/>
            <person name="Dodsworth S.J."/>
            <person name="Durbin R.M."/>
            <person name="Ellington A.G."/>
            <person name="Evans K.L."/>
            <person name="Fey J.M."/>
            <person name="Fleming K."/>
            <person name="French L."/>
            <person name="Garner A.A."/>
            <person name="Gilbert J.G.R."/>
            <person name="Goward M.E."/>
            <person name="Grafham D.V."/>
            <person name="Griffiths M.N.D."/>
            <person name="Hall C."/>
            <person name="Hall R.E."/>
            <person name="Hall-Tamlyn G."/>
            <person name="Heathcott R.W."/>
            <person name="Ho S."/>
            <person name="Holmes S."/>
            <person name="Hunt S.E."/>
            <person name="Jones M.C."/>
            <person name="Kershaw J."/>
            <person name="Kimberley A.M."/>
            <person name="King A."/>
            <person name="Laird G.K."/>
            <person name="Langford C.F."/>
            <person name="Leversha M.A."/>
            <person name="Lloyd C."/>
            <person name="Lloyd D.M."/>
            <person name="Martyn I.D."/>
            <person name="Mashreghi-Mohammadi M."/>
            <person name="Matthews L.H."/>
            <person name="Mccann O.T."/>
            <person name="Mcclay J."/>
            <person name="Mclaren S."/>
            <person name="McMurray A.A."/>
            <person name="Milne S.A."/>
            <person name="Mortimore B.J."/>
            <person name="Odell C.N."/>
            <person name="Pavitt R."/>
            <person name="Pearce A.V."/>
            <person name="Pearson D."/>
            <person name="Phillimore B.J.C.T."/>
            <person name="Phillips S.H."/>
            <person name="Plumb R.W."/>
            <person name="Ramsay H."/>
            <person name="Ramsey Y."/>
            <person name="Rogers L."/>
            <person name="Ross M.T."/>
            <person name="Scott C.E."/>
            <person name="Sehra H.K."/>
            <person name="Skuce C.D."/>
            <person name="Smalley S."/>
            <person name="Smith M.L."/>
            <person name="Soderlund C."/>
            <person name="Spragon L."/>
            <person name="Steward C.A."/>
            <person name="Sulston J.E."/>
            <person name="Swann R.M."/>
            <person name="Vaudin M."/>
            <person name="Wall M."/>
            <person name="Wallis J.M."/>
            <person name="Whiteley M.N."/>
            <person name="Willey D.L."/>
            <person name="Williams L."/>
            <person name="Williams S.A."/>
            <person name="Williamson H."/>
            <person name="Wilmer T.E."/>
            <person name="Wilming L."/>
            <person name="Wright C.L."/>
            <person name="Hubbard T."/>
            <person name="Bentley D.R."/>
            <person name="Beck S."/>
            <person name="Rogers J."/>
            <person name="Shimizu N."/>
            <person name="Minoshima S."/>
            <person name="Kawasaki K."/>
            <person name="Sasaki T."/>
            <person name="Asakawa S."/>
            <person name="Kudoh J."/>
            <person name="Shintani A."/>
            <person name="Shibuya K."/>
            <person name="Yoshizaki Y."/>
            <person name="Aoki N."/>
            <person name="Mitsuyama S."/>
            <person name="Roe B.A."/>
            <person name="Chen F."/>
            <person name="Chu L."/>
            <person name="Crabtree J."/>
            <person name="Deschamps S."/>
            <person name="Do A."/>
            <person name="Do T."/>
            <person name="Dorman A."/>
            <person name="Fang F."/>
            <person name="Fu Y."/>
            <person name="Hu P."/>
            <person name="Hua A."/>
            <person name="Kenton S."/>
            <person name="Lai H."/>
            <person name="Lao H.I."/>
            <person name="Lewis J."/>
            <person name="Lewis S."/>
            <person name="Lin S.-P."/>
            <person name="Loh P."/>
            <person name="Malaj E."/>
            <person name="Nguyen T."/>
            <person name="Pan H."/>
            <person name="Phan S."/>
            <person name="Qi S."/>
            <person name="Qian Y."/>
            <person name="Ray L."/>
            <person name="Ren Q."/>
            <person name="Shaull S."/>
            <person name="Sloan D."/>
            <person name="Song L."/>
            <person name="Wang Q."/>
            <person name="Wang Y."/>
            <person name="Wang Z."/>
            <person name="White J."/>
            <person name="Willingham D."/>
            <person name="Wu H."/>
            <person name="Yao Z."/>
            <person name="Zhan M."/>
            <person name="Zhang G."/>
            <person name="Chissoe S."/>
            <person name="Murray J."/>
            <person name="Miller N."/>
            <person name="Minx P."/>
            <person name="Fulton R."/>
            <person name="Johnson D."/>
            <person name="Bemis G."/>
            <person name="Bentley D."/>
            <person name="Bradshaw H."/>
            <person name="Bourne S."/>
            <person name="Cordes M."/>
            <person name="Du Z."/>
            <person name="Fulton L."/>
            <person name="Goela D."/>
            <person name="Graves T."/>
            <person name="Hawkins J."/>
            <person name="Hinds K."/>
            <person name="Kemp K."/>
            <person name="Latreille P."/>
            <person name="Layman D."/>
            <person name="Ozersky P."/>
            <person name="Rohlfing T."/>
            <person name="Scheet P."/>
            <person name="Walker C."/>
            <person name="Wamsley A."/>
            <person name="Wohldmann P."/>
            <person name="Pepin K."/>
            <person name="Nelson J."/>
            <person name="Korf I."/>
            <person name="Bedell J.A."/>
            <person name="Hillier L.W."/>
            <person name="Mardis E."/>
            <person name="Waterston R."/>
            <person name="Wilson R."/>
            <person name="Emanuel B.S."/>
            <person name="Shaikh T."/>
            <person name="Kurahashi H."/>
            <person name="Saitta S."/>
            <person name="Budarf M.L."/>
            <person name="McDermid H.E."/>
            <person name="Johnson A."/>
            <person name="Wong A.C.C."/>
            <person name="Morrow B.E."/>
            <person name="Edelmann L."/>
            <person name="Kim U.J."/>
            <person name="Shizuya H."/>
            <person name="Simon M.I."/>
            <person name="Dumanski J.P."/>
            <person name="Peyrard M."/>
            <person name="Kedra D."/>
            <person name="Seroussi E."/>
            <person name="Fransson I."/>
            <person name="Tapia I."/>
            <person name="Bruder C.E."/>
            <person name="O'Brien K.P."/>
            <person name="Wilkinson P."/>
            <person name="Bodenteich A."/>
            <person name="Hartman K."/>
            <person name="Hu X."/>
            <person name="Khan A.S."/>
            <person name="Lane L."/>
            <person name="Tilahun Y."/>
            <person name="Wright H."/>
        </authorList>
    </citation>
    <scope>NUCLEOTIDE SEQUENCE [LARGE SCALE GENOMIC DNA]</scope>
</reference>
<proteinExistence type="inferred from homology"/>
<keyword id="KW-1185">Reference proteome</keyword>
<protein>
    <recommendedName>
        <fullName evidence="2">Protein FAM246A</fullName>
    </recommendedName>
</protein>
<organism>
    <name type="scientific">Homo sapiens</name>
    <name type="common">Human</name>
    <dbReference type="NCBI Taxonomy" id="9606"/>
    <lineage>
        <taxon>Eukaryota</taxon>
        <taxon>Metazoa</taxon>
        <taxon>Chordata</taxon>
        <taxon>Craniata</taxon>
        <taxon>Vertebrata</taxon>
        <taxon>Euteleostomi</taxon>
        <taxon>Mammalia</taxon>
        <taxon>Eutheria</taxon>
        <taxon>Euarchontoglires</taxon>
        <taxon>Primates</taxon>
        <taxon>Haplorrhini</taxon>
        <taxon>Catarrhini</taxon>
        <taxon>Hominidae</taxon>
        <taxon>Homo</taxon>
    </lineage>
</organism>
<accession>A0A494C0Y3</accession>
<name>F246A_HUMAN</name>
<evidence type="ECO:0000256" key="1">
    <source>
        <dbReference type="SAM" id="MobiDB-lite"/>
    </source>
</evidence>
<evidence type="ECO:0000305" key="2"/>
<evidence type="ECO:0000312" key="3">
    <source>
        <dbReference type="HGNC" id="HGNC:54844"/>
    </source>
</evidence>
<comment type="similarity">
    <text evidence="2">Belongs to the FAM246 family.</text>
</comment>
<feature type="chain" id="PRO_0000450450" description="Protein FAM246A">
    <location>
        <begin position="1"/>
        <end position="232"/>
    </location>
</feature>
<feature type="region of interest" description="Disordered" evidence="1">
    <location>
        <begin position="1"/>
        <end position="47"/>
    </location>
</feature>
<feature type="region of interest" description="Disordered" evidence="1">
    <location>
        <begin position="153"/>
        <end position="178"/>
    </location>
</feature>
<feature type="region of interest" description="Disordered" evidence="1">
    <location>
        <begin position="191"/>
        <end position="232"/>
    </location>
</feature>
<feature type="compositionally biased region" description="Basic and acidic residues" evidence="1">
    <location>
        <begin position="19"/>
        <end position="31"/>
    </location>
</feature>
<feature type="compositionally biased region" description="Basic residues" evidence="1">
    <location>
        <begin position="211"/>
        <end position="220"/>
    </location>
</feature>
<gene>
    <name evidence="3" type="primary">FAM246A</name>
</gene>